<gene>
    <name evidence="1" type="primary">era</name>
    <name type="ordered locus">YPDSF_1552</name>
</gene>
<organism>
    <name type="scientific">Yersinia pestis (strain Pestoides F)</name>
    <dbReference type="NCBI Taxonomy" id="386656"/>
    <lineage>
        <taxon>Bacteria</taxon>
        <taxon>Pseudomonadati</taxon>
        <taxon>Pseudomonadota</taxon>
        <taxon>Gammaproteobacteria</taxon>
        <taxon>Enterobacterales</taxon>
        <taxon>Yersiniaceae</taxon>
        <taxon>Yersinia</taxon>
    </lineage>
</organism>
<accession>A4TKX7</accession>
<sequence length="303" mass="34473">MSEVEKTYCGFIAIVGRPNVGKSTLLNELLGQKISITSRKPQTTRHRIMGIHTEGPYQAIYVDTPGLHIEEKRAINRLMNRAASSSLGDVELVIFVVEGTHWTADDEMVVNKLRSLQCPVLLAINKVDNVTDKTKLLPHMQFLSQQMNFLDVVPISAEKGMNVDTIASIVRKHMPEAEHHFPEDYITDRSQRFMASEIIREKLMRFLGEELPYSVTVEIEQFVPNERGGYNIHGLILVEREGQKKMVIGNKGSKIKVIGTEARQDMERMFEAKVHLELWVKVKSGWADDERALRSLGYTDDLK</sequence>
<comment type="function">
    <text evidence="1">An essential GTPase that binds both GDP and GTP, with rapid nucleotide exchange. Plays a role in 16S rRNA processing and 30S ribosomal subunit biogenesis and possibly also in cell cycle regulation and energy metabolism.</text>
</comment>
<comment type="subunit">
    <text evidence="1">Monomer.</text>
</comment>
<comment type="subcellular location">
    <subcellularLocation>
        <location>Cytoplasm</location>
    </subcellularLocation>
    <subcellularLocation>
        <location evidence="1">Cell inner membrane</location>
        <topology evidence="1">Peripheral membrane protein</topology>
    </subcellularLocation>
</comment>
<comment type="similarity">
    <text evidence="1 2">Belongs to the TRAFAC class TrmE-Era-EngA-EngB-Septin-like GTPase superfamily. Era GTPase family.</text>
</comment>
<reference key="1">
    <citation type="submission" date="2007-02" db="EMBL/GenBank/DDBJ databases">
        <title>Complete sequence of chromosome of Yersinia pestis Pestoides F.</title>
        <authorList>
            <consortium name="US DOE Joint Genome Institute"/>
            <person name="Copeland A."/>
            <person name="Lucas S."/>
            <person name="Lapidus A."/>
            <person name="Barry K."/>
            <person name="Detter J.C."/>
            <person name="Glavina del Rio T."/>
            <person name="Hammon N."/>
            <person name="Israni S."/>
            <person name="Dalin E."/>
            <person name="Tice H."/>
            <person name="Pitluck S."/>
            <person name="Di Bartolo G."/>
            <person name="Chain P."/>
            <person name="Malfatti S."/>
            <person name="Shin M."/>
            <person name="Vergez L."/>
            <person name="Schmutz J."/>
            <person name="Larimer F."/>
            <person name="Land M."/>
            <person name="Hauser L."/>
            <person name="Worsham P."/>
            <person name="Chu M."/>
            <person name="Bearden S."/>
            <person name="Garcia E."/>
            <person name="Richardson P."/>
        </authorList>
    </citation>
    <scope>NUCLEOTIDE SEQUENCE [LARGE SCALE GENOMIC DNA]</scope>
    <source>
        <strain>Pestoides F</strain>
    </source>
</reference>
<proteinExistence type="inferred from homology"/>
<protein>
    <recommendedName>
        <fullName evidence="1">GTPase Era</fullName>
    </recommendedName>
</protein>
<feature type="chain" id="PRO_1000079776" description="GTPase Era">
    <location>
        <begin position="1"/>
        <end position="303"/>
    </location>
</feature>
<feature type="domain" description="Era-type G" evidence="2">
    <location>
        <begin position="8"/>
        <end position="176"/>
    </location>
</feature>
<feature type="domain" description="KH type-2" evidence="1">
    <location>
        <begin position="207"/>
        <end position="284"/>
    </location>
</feature>
<feature type="region of interest" description="G1" evidence="2">
    <location>
        <begin position="16"/>
        <end position="23"/>
    </location>
</feature>
<feature type="region of interest" description="G2" evidence="2">
    <location>
        <begin position="42"/>
        <end position="46"/>
    </location>
</feature>
<feature type="region of interest" description="G3" evidence="2">
    <location>
        <begin position="63"/>
        <end position="66"/>
    </location>
</feature>
<feature type="region of interest" description="G4" evidence="2">
    <location>
        <begin position="125"/>
        <end position="128"/>
    </location>
</feature>
<feature type="region of interest" description="G5" evidence="2">
    <location>
        <begin position="155"/>
        <end position="157"/>
    </location>
</feature>
<feature type="binding site" evidence="1">
    <location>
        <begin position="16"/>
        <end position="23"/>
    </location>
    <ligand>
        <name>GTP</name>
        <dbReference type="ChEBI" id="CHEBI:37565"/>
    </ligand>
</feature>
<feature type="binding site" evidence="1">
    <location>
        <begin position="63"/>
        <end position="67"/>
    </location>
    <ligand>
        <name>GTP</name>
        <dbReference type="ChEBI" id="CHEBI:37565"/>
    </ligand>
</feature>
<feature type="binding site" evidence="1">
    <location>
        <begin position="125"/>
        <end position="128"/>
    </location>
    <ligand>
        <name>GTP</name>
        <dbReference type="ChEBI" id="CHEBI:37565"/>
    </ligand>
</feature>
<dbReference type="EMBL" id="CP000668">
    <property type="protein sequence ID" value="ABP39939.1"/>
    <property type="molecule type" value="Genomic_DNA"/>
</dbReference>
<dbReference type="RefSeq" id="WP_002214829.1">
    <property type="nucleotide sequence ID" value="NZ_CP009715.1"/>
</dbReference>
<dbReference type="SMR" id="A4TKX7"/>
<dbReference type="GeneID" id="96662248"/>
<dbReference type="KEGG" id="ypp:YPDSF_1552"/>
<dbReference type="PATRIC" id="fig|386656.14.peg.2219"/>
<dbReference type="GO" id="GO:0005829">
    <property type="term" value="C:cytosol"/>
    <property type="evidence" value="ECO:0007669"/>
    <property type="project" value="TreeGrafter"/>
</dbReference>
<dbReference type="GO" id="GO:0005886">
    <property type="term" value="C:plasma membrane"/>
    <property type="evidence" value="ECO:0007669"/>
    <property type="project" value="UniProtKB-SubCell"/>
</dbReference>
<dbReference type="GO" id="GO:0005525">
    <property type="term" value="F:GTP binding"/>
    <property type="evidence" value="ECO:0007669"/>
    <property type="project" value="UniProtKB-UniRule"/>
</dbReference>
<dbReference type="GO" id="GO:0003924">
    <property type="term" value="F:GTPase activity"/>
    <property type="evidence" value="ECO:0007669"/>
    <property type="project" value="UniProtKB-UniRule"/>
</dbReference>
<dbReference type="GO" id="GO:0043024">
    <property type="term" value="F:ribosomal small subunit binding"/>
    <property type="evidence" value="ECO:0007669"/>
    <property type="project" value="TreeGrafter"/>
</dbReference>
<dbReference type="GO" id="GO:0070181">
    <property type="term" value="F:small ribosomal subunit rRNA binding"/>
    <property type="evidence" value="ECO:0007669"/>
    <property type="project" value="UniProtKB-UniRule"/>
</dbReference>
<dbReference type="GO" id="GO:0000028">
    <property type="term" value="P:ribosomal small subunit assembly"/>
    <property type="evidence" value="ECO:0007669"/>
    <property type="project" value="TreeGrafter"/>
</dbReference>
<dbReference type="CDD" id="cd04163">
    <property type="entry name" value="Era"/>
    <property type="match status" value="1"/>
</dbReference>
<dbReference type="CDD" id="cd22534">
    <property type="entry name" value="KH-II_Era"/>
    <property type="match status" value="1"/>
</dbReference>
<dbReference type="FunFam" id="3.30.300.20:FF:000003">
    <property type="entry name" value="GTPase Era"/>
    <property type="match status" value="1"/>
</dbReference>
<dbReference type="FunFam" id="3.40.50.300:FF:000094">
    <property type="entry name" value="GTPase Era"/>
    <property type="match status" value="1"/>
</dbReference>
<dbReference type="Gene3D" id="3.30.300.20">
    <property type="match status" value="1"/>
</dbReference>
<dbReference type="Gene3D" id="3.40.50.300">
    <property type="entry name" value="P-loop containing nucleotide triphosphate hydrolases"/>
    <property type="match status" value="1"/>
</dbReference>
<dbReference type="HAMAP" id="MF_00367">
    <property type="entry name" value="GTPase_Era"/>
    <property type="match status" value="1"/>
</dbReference>
<dbReference type="InterPro" id="IPR030388">
    <property type="entry name" value="G_ERA_dom"/>
</dbReference>
<dbReference type="InterPro" id="IPR006073">
    <property type="entry name" value="GTP-bd"/>
</dbReference>
<dbReference type="InterPro" id="IPR005662">
    <property type="entry name" value="GTPase_Era-like"/>
</dbReference>
<dbReference type="InterPro" id="IPR015946">
    <property type="entry name" value="KH_dom-like_a/b"/>
</dbReference>
<dbReference type="InterPro" id="IPR004044">
    <property type="entry name" value="KH_dom_type_2"/>
</dbReference>
<dbReference type="InterPro" id="IPR009019">
    <property type="entry name" value="KH_sf_prok-type"/>
</dbReference>
<dbReference type="InterPro" id="IPR027417">
    <property type="entry name" value="P-loop_NTPase"/>
</dbReference>
<dbReference type="InterPro" id="IPR005225">
    <property type="entry name" value="Small_GTP-bd"/>
</dbReference>
<dbReference type="NCBIfam" id="TIGR00436">
    <property type="entry name" value="era"/>
    <property type="match status" value="1"/>
</dbReference>
<dbReference type="NCBIfam" id="NF000908">
    <property type="entry name" value="PRK00089.1"/>
    <property type="match status" value="1"/>
</dbReference>
<dbReference type="NCBIfam" id="TIGR00231">
    <property type="entry name" value="small_GTP"/>
    <property type="match status" value="1"/>
</dbReference>
<dbReference type="PANTHER" id="PTHR42698">
    <property type="entry name" value="GTPASE ERA"/>
    <property type="match status" value="1"/>
</dbReference>
<dbReference type="PANTHER" id="PTHR42698:SF1">
    <property type="entry name" value="GTPASE ERA, MITOCHONDRIAL"/>
    <property type="match status" value="1"/>
</dbReference>
<dbReference type="Pfam" id="PF07650">
    <property type="entry name" value="KH_2"/>
    <property type="match status" value="1"/>
</dbReference>
<dbReference type="Pfam" id="PF01926">
    <property type="entry name" value="MMR_HSR1"/>
    <property type="match status" value="1"/>
</dbReference>
<dbReference type="SUPFAM" id="SSF52540">
    <property type="entry name" value="P-loop containing nucleoside triphosphate hydrolases"/>
    <property type="match status" value="1"/>
</dbReference>
<dbReference type="SUPFAM" id="SSF54814">
    <property type="entry name" value="Prokaryotic type KH domain (KH-domain type II)"/>
    <property type="match status" value="1"/>
</dbReference>
<dbReference type="PROSITE" id="PS51713">
    <property type="entry name" value="G_ERA"/>
    <property type="match status" value="1"/>
</dbReference>
<dbReference type="PROSITE" id="PS50823">
    <property type="entry name" value="KH_TYPE_2"/>
    <property type="match status" value="1"/>
</dbReference>
<evidence type="ECO:0000255" key="1">
    <source>
        <dbReference type="HAMAP-Rule" id="MF_00367"/>
    </source>
</evidence>
<evidence type="ECO:0000255" key="2">
    <source>
        <dbReference type="PROSITE-ProRule" id="PRU01050"/>
    </source>
</evidence>
<keyword id="KW-0997">Cell inner membrane</keyword>
<keyword id="KW-1003">Cell membrane</keyword>
<keyword id="KW-0963">Cytoplasm</keyword>
<keyword id="KW-0342">GTP-binding</keyword>
<keyword id="KW-0472">Membrane</keyword>
<keyword id="KW-0547">Nucleotide-binding</keyword>
<keyword id="KW-0690">Ribosome biogenesis</keyword>
<keyword id="KW-0694">RNA-binding</keyword>
<keyword id="KW-0699">rRNA-binding</keyword>
<name>ERA_YERPP</name>